<proteinExistence type="inferred from homology"/>
<organism>
    <name type="scientific">Dictyostelium discoideum</name>
    <name type="common">Social amoeba</name>
    <dbReference type="NCBI Taxonomy" id="44689"/>
    <lineage>
        <taxon>Eukaryota</taxon>
        <taxon>Amoebozoa</taxon>
        <taxon>Evosea</taxon>
        <taxon>Eumycetozoa</taxon>
        <taxon>Dictyostelia</taxon>
        <taxon>Dictyosteliales</taxon>
        <taxon>Dictyosteliaceae</taxon>
        <taxon>Dictyostelium</taxon>
    </lineage>
</organism>
<gene>
    <name type="primary">shmt2</name>
    <name type="ORF">DDB_G0291652</name>
</gene>
<accession>Q54EW1</accession>
<name>GLYC2_DICDI</name>
<keyword id="KW-0554">One-carbon metabolism</keyword>
<keyword id="KW-0663">Pyridoxal phosphate</keyword>
<keyword id="KW-1185">Reference proteome</keyword>
<keyword id="KW-0808">Transferase</keyword>
<feature type="chain" id="PRO_0000327958" description="Serine hydroxymethyltransferase 2">
    <location>
        <begin position="1"/>
        <end position="481"/>
    </location>
</feature>
<feature type="modified residue" description="N6-(pyridoxal phosphate)lysine" evidence="1">
    <location>
        <position position="264"/>
    </location>
</feature>
<comment type="function">
    <text evidence="1">Interconversion of serine and glycine.</text>
</comment>
<comment type="catalytic activity">
    <reaction evidence="1">
        <text>(6R)-5,10-methylene-5,6,7,8-tetrahydrofolate + glycine + H2O = (6S)-5,6,7,8-tetrahydrofolate + L-serine</text>
        <dbReference type="Rhea" id="RHEA:15481"/>
        <dbReference type="ChEBI" id="CHEBI:15377"/>
        <dbReference type="ChEBI" id="CHEBI:15636"/>
        <dbReference type="ChEBI" id="CHEBI:33384"/>
        <dbReference type="ChEBI" id="CHEBI:57305"/>
        <dbReference type="ChEBI" id="CHEBI:57453"/>
        <dbReference type="EC" id="2.1.2.1"/>
    </reaction>
</comment>
<comment type="cofactor">
    <cofactor evidence="1">
        <name>pyridoxal 5'-phosphate</name>
        <dbReference type="ChEBI" id="CHEBI:597326"/>
    </cofactor>
</comment>
<comment type="pathway">
    <text evidence="1">One-carbon metabolism; tetrahydrofolate interconversion.</text>
</comment>
<comment type="subunit">
    <text evidence="1">Homotetramer.</text>
</comment>
<comment type="similarity">
    <text evidence="2">Belongs to the SHMT family.</text>
</comment>
<dbReference type="EC" id="2.1.2.1" evidence="1"/>
<dbReference type="EMBL" id="AAFI02000177">
    <property type="protein sequence ID" value="EAL61810.1"/>
    <property type="molecule type" value="Genomic_DNA"/>
</dbReference>
<dbReference type="RefSeq" id="XP_635129.1">
    <property type="nucleotide sequence ID" value="XM_630037.1"/>
</dbReference>
<dbReference type="SMR" id="Q54EW1"/>
<dbReference type="FunCoup" id="Q54EW1">
    <property type="interactions" value="733"/>
</dbReference>
<dbReference type="STRING" id="44689.Q54EW1"/>
<dbReference type="PaxDb" id="44689-DDB0230073"/>
<dbReference type="EnsemblProtists" id="EAL61810">
    <property type="protein sequence ID" value="EAL61810"/>
    <property type="gene ID" value="DDB_G0291652"/>
</dbReference>
<dbReference type="GeneID" id="8628075"/>
<dbReference type="KEGG" id="ddi:DDB_G0291652"/>
<dbReference type="dictyBase" id="DDB_G0291652">
    <property type="gene designation" value="shmt2"/>
</dbReference>
<dbReference type="VEuPathDB" id="AmoebaDB:DDB_G0291652"/>
<dbReference type="eggNOG" id="KOG2467">
    <property type="taxonomic scope" value="Eukaryota"/>
</dbReference>
<dbReference type="HOGENOM" id="CLU_022477_0_2_1"/>
<dbReference type="InParanoid" id="Q54EW1"/>
<dbReference type="OMA" id="VTNRNAI"/>
<dbReference type="PhylomeDB" id="Q54EW1"/>
<dbReference type="UniPathway" id="UPA00193"/>
<dbReference type="PRO" id="PR:Q54EW1"/>
<dbReference type="Proteomes" id="UP000002195">
    <property type="component" value="Chromosome 6"/>
</dbReference>
<dbReference type="GO" id="GO:0005737">
    <property type="term" value="C:cytoplasm"/>
    <property type="evidence" value="ECO:0000318"/>
    <property type="project" value="GO_Central"/>
</dbReference>
<dbReference type="GO" id="GO:0005759">
    <property type="term" value="C:mitochondrial matrix"/>
    <property type="evidence" value="ECO:0000250"/>
    <property type="project" value="dictyBase"/>
</dbReference>
<dbReference type="GO" id="GO:0005739">
    <property type="term" value="C:mitochondrion"/>
    <property type="evidence" value="ECO:0000318"/>
    <property type="project" value="GO_Central"/>
</dbReference>
<dbReference type="GO" id="GO:0004372">
    <property type="term" value="F:glycine hydroxymethyltransferase activity"/>
    <property type="evidence" value="ECO:0000250"/>
    <property type="project" value="dictyBase"/>
</dbReference>
<dbReference type="GO" id="GO:0030170">
    <property type="term" value="F:pyridoxal phosphate binding"/>
    <property type="evidence" value="ECO:0000318"/>
    <property type="project" value="GO_Central"/>
</dbReference>
<dbReference type="GO" id="GO:0019264">
    <property type="term" value="P:glycine biosynthetic process from serine"/>
    <property type="evidence" value="ECO:0000318"/>
    <property type="project" value="GO_Central"/>
</dbReference>
<dbReference type="GO" id="GO:0006730">
    <property type="term" value="P:one-carbon metabolic process"/>
    <property type="evidence" value="ECO:0000250"/>
    <property type="project" value="dictyBase"/>
</dbReference>
<dbReference type="GO" id="GO:0035999">
    <property type="term" value="P:tetrahydrofolate interconversion"/>
    <property type="evidence" value="ECO:0007669"/>
    <property type="project" value="UniProtKB-UniPathway"/>
</dbReference>
<dbReference type="GO" id="GO:0046653">
    <property type="term" value="P:tetrahydrofolate metabolic process"/>
    <property type="evidence" value="ECO:0000318"/>
    <property type="project" value="GO_Central"/>
</dbReference>
<dbReference type="CDD" id="cd00378">
    <property type="entry name" value="SHMT"/>
    <property type="match status" value="1"/>
</dbReference>
<dbReference type="FunFam" id="3.40.640.10:FF:000050">
    <property type="entry name" value="Serine hydroxymethyltransferase"/>
    <property type="match status" value="1"/>
</dbReference>
<dbReference type="Gene3D" id="3.90.1150.10">
    <property type="entry name" value="Aspartate Aminotransferase, domain 1"/>
    <property type="match status" value="1"/>
</dbReference>
<dbReference type="Gene3D" id="3.40.640.10">
    <property type="entry name" value="Type I PLP-dependent aspartate aminotransferase-like (Major domain)"/>
    <property type="match status" value="1"/>
</dbReference>
<dbReference type="HAMAP" id="MF_00051">
    <property type="entry name" value="SHMT"/>
    <property type="match status" value="1"/>
</dbReference>
<dbReference type="InterPro" id="IPR015424">
    <property type="entry name" value="PyrdxlP-dep_Trfase"/>
</dbReference>
<dbReference type="InterPro" id="IPR015421">
    <property type="entry name" value="PyrdxlP-dep_Trfase_major"/>
</dbReference>
<dbReference type="InterPro" id="IPR015422">
    <property type="entry name" value="PyrdxlP-dep_Trfase_small"/>
</dbReference>
<dbReference type="InterPro" id="IPR001085">
    <property type="entry name" value="Ser_HO-MeTrfase"/>
</dbReference>
<dbReference type="InterPro" id="IPR049943">
    <property type="entry name" value="Ser_HO-MeTrfase-like"/>
</dbReference>
<dbReference type="InterPro" id="IPR019798">
    <property type="entry name" value="Ser_HO-MeTrfase_PLP_BS"/>
</dbReference>
<dbReference type="InterPro" id="IPR039429">
    <property type="entry name" value="SHMT-like_dom"/>
</dbReference>
<dbReference type="NCBIfam" id="NF000586">
    <property type="entry name" value="PRK00011.1"/>
    <property type="match status" value="1"/>
</dbReference>
<dbReference type="PANTHER" id="PTHR11680">
    <property type="entry name" value="SERINE HYDROXYMETHYLTRANSFERASE"/>
    <property type="match status" value="1"/>
</dbReference>
<dbReference type="PANTHER" id="PTHR11680:SF18">
    <property type="entry name" value="SERINE HYDROXYMETHYLTRANSFERASE 2"/>
    <property type="match status" value="1"/>
</dbReference>
<dbReference type="Pfam" id="PF00464">
    <property type="entry name" value="SHMT"/>
    <property type="match status" value="1"/>
</dbReference>
<dbReference type="PIRSF" id="PIRSF000412">
    <property type="entry name" value="SHMT"/>
    <property type="match status" value="1"/>
</dbReference>
<dbReference type="SUPFAM" id="SSF53383">
    <property type="entry name" value="PLP-dependent transferases"/>
    <property type="match status" value="1"/>
</dbReference>
<dbReference type="PROSITE" id="PS00096">
    <property type="entry name" value="SHMT"/>
    <property type="match status" value="1"/>
</dbReference>
<reference key="1">
    <citation type="journal article" date="2005" name="Nature">
        <title>The genome of the social amoeba Dictyostelium discoideum.</title>
        <authorList>
            <person name="Eichinger L."/>
            <person name="Pachebat J.A."/>
            <person name="Gloeckner G."/>
            <person name="Rajandream M.A."/>
            <person name="Sucgang R."/>
            <person name="Berriman M."/>
            <person name="Song J."/>
            <person name="Olsen R."/>
            <person name="Szafranski K."/>
            <person name="Xu Q."/>
            <person name="Tunggal B."/>
            <person name="Kummerfeld S."/>
            <person name="Madera M."/>
            <person name="Konfortov B.A."/>
            <person name="Rivero F."/>
            <person name="Bankier A.T."/>
            <person name="Lehmann R."/>
            <person name="Hamlin N."/>
            <person name="Davies R."/>
            <person name="Gaudet P."/>
            <person name="Fey P."/>
            <person name="Pilcher K."/>
            <person name="Chen G."/>
            <person name="Saunders D."/>
            <person name="Sodergren E.J."/>
            <person name="Davis P."/>
            <person name="Kerhornou A."/>
            <person name="Nie X."/>
            <person name="Hall N."/>
            <person name="Anjard C."/>
            <person name="Hemphill L."/>
            <person name="Bason N."/>
            <person name="Farbrother P."/>
            <person name="Desany B."/>
            <person name="Just E."/>
            <person name="Morio T."/>
            <person name="Rost R."/>
            <person name="Churcher C.M."/>
            <person name="Cooper J."/>
            <person name="Haydock S."/>
            <person name="van Driessche N."/>
            <person name="Cronin A."/>
            <person name="Goodhead I."/>
            <person name="Muzny D.M."/>
            <person name="Mourier T."/>
            <person name="Pain A."/>
            <person name="Lu M."/>
            <person name="Harper D."/>
            <person name="Lindsay R."/>
            <person name="Hauser H."/>
            <person name="James K.D."/>
            <person name="Quiles M."/>
            <person name="Madan Babu M."/>
            <person name="Saito T."/>
            <person name="Buchrieser C."/>
            <person name="Wardroper A."/>
            <person name="Felder M."/>
            <person name="Thangavelu M."/>
            <person name="Johnson D."/>
            <person name="Knights A."/>
            <person name="Loulseged H."/>
            <person name="Mungall K.L."/>
            <person name="Oliver K."/>
            <person name="Price C."/>
            <person name="Quail M.A."/>
            <person name="Urushihara H."/>
            <person name="Hernandez J."/>
            <person name="Rabbinowitsch E."/>
            <person name="Steffen D."/>
            <person name="Sanders M."/>
            <person name="Ma J."/>
            <person name="Kohara Y."/>
            <person name="Sharp S."/>
            <person name="Simmonds M.N."/>
            <person name="Spiegler S."/>
            <person name="Tivey A."/>
            <person name="Sugano S."/>
            <person name="White B."/>
            <person name="Walker D."/>
            <person name="Woodward J.R."/>
            <person name="Winckler T."/>
            <person name="Tanaka Y."/>
            <person name="Shaulsky G."/>
            <person name="Schleicher M."/>
            <person name="Weinstock G.M."/>
            <person name="Rosenthal A."/>
            <person name="Cox E.C."/>
            <person name="Chisholm R.L."/>
            <person name="Gibbs R.A."/>
            <person name="Loomis W.F."/>
            <person name="Platzer M."/>
            <person name="Kay R.R."/>
            <person name="Williams J.G."/>
            <person name="Dear P.H."/>
            <person name="Noegel A.A."/>
            <person name="Barrell B.G."/>
            <person name="Kuspa A."/>
        </authorList>
    </citation>
    <scope>NUCLEOTIDE SEQUENCE [LARGE SCALE GENOMIC DNA]</scope>
    <source>
        <strain>AX4</strain>
    </source>
</reference>
<protein>
    <recommendedName>
        <fullName>Serine hydroxymethyltransferase 2</fullName>
        <shortName>SHMT 2</shortName>
        <ecNumber evidence="1">2.1.2.1</ecNumber>
    </recommendedName>
    <alternativeName>
        <fullName>Glycine hydroxymethyltransferase 2</fullName>
    </alternativeName>
    <alternativeName>
        <fullName>Serine methylase 2</fullName>
    </alternativeName>
</protein>
<evidence type="ECO:0000250" key="1">
    <source>
        <dbReference type="UniProtKB" id="P34896"/>
    </source>
</evidence>
<evidence type="ECO:0000305" key="2"/>
<sequence length="481" mass="53584">MLKSLSKLTPSIRGVVSINRSFCTKKFLPTNRSVSESDPEIYDLMMKEKQRQFTGLELIASENFTSRAVMESIGSCFTNKYAEGLPGARYYGGNEVVDQLENLCIKRALETFNLNPEEWGVNVQPYSGSTANFAAFTGLLKPHDRIMGLDLPSGGHLTHGYQTDKKKISATSIFFESMPYQVNETGYVDYNKMEANAALFRPKLLIAGASAYPREWDYERMRKIADKHGAYLLCDMAHISGMVAGKQAISPFLFCDVVTTTTHKTLRGPRAGLIFFRKTKRRDAKGNIIDDDLENRINFAVFPSCQGGPHENTIAGIAVALKEASSPDFQEYTKQVRRNSQTMGEELKKRGYSLVTEGTDNHLVLWDLRPQGITGSKIEKACDEAHITVNKNAVYGDTNAIAPGGVRLGAPALTSRGLKEQDFVKVVDFLDRVVKISLDIQSKVGKKMPDFQRAIADNQDLKQIRQEVKEFSTKFGMPGEL</sequence>